<feature type="chain" id="PRO_0000282719" description="Ribosomal RNA large subunit methyltransferase E">
    <location>
        <begin position="1"/>
        <end position="220"/>
    </location>
</feature>
<feature type="active site" description="Proton acceptor" evidence="1">
    <location>
        <position position="173"/>
    </location>
</feature>
<feature type="binding site" evidence="1">
    <location>
        <position position="64"/>
    </location>
    <ligand>
        <name>S-adenosyl-L-methionine</name>
        <dbReference type="ChEBI" id="CHEBI:59789"/>
    </ligand>
</feature>
<feature type="binding site" evidence="1">
    <location>
        <position position="66"/>
    </location>
    <ligand>
        <name>S-adenosyl-L-methionine</name>
        <dbReference type="ChEBI" id="CHEBI:59789"/>
    </ligand>
</feature>
<feature type="binding site" evidence="1">
    <location>
        <position position="92"/>
    </location>
    <ligand>
        <name>S-adenosyl-L-methionine</name>
        <dbReference type="ChEBI" id="CHEBI:59789"/>
    </ligand>
</feature>
<feature type="binding site" evidence="1">
    <location>
        <position position="108"/>
    </location>
    <ligand>
        <name>S-adenosyl-L-methionine</name>
        <dbReference type="ChEBI" id="CHEBI:59789"/>
    </ligand>
</feature>
<feature type="binding site" evidence="1">
    <location>
        <position position="133"/>
    </location>
    <ligand>
        <name>S-adenosyl-L-methionine</name>
        <dbReference type="ChEBI" id="CHEBI:59789"/>
    </ligand>
</feature>
<accession>A1W8H0</accession>
<evidence type="ECO:0000255" key="1">
    <source>
        <dbReference type="HAMAP-Rule" id="MF_01547"/>
    </source>
</evidence>
<evidence type="ECO:0000305" key="2"/>
<organism>
    <name type="scientific">Acidovorax sp. (strain JS42)</name>
    <dbReference type="NCBI Taxonomy" id="232721"/>
    <lineage>
        <taxon>Bacteria</taxon>
        <taxon>Pseudomonadati</taxon>
        <taxon>Pseudomonadota</taxon>
        <taxon>Betaproteobacteria</taxon>
        <taxon>Burkholderiales</taxon>
        <taxon>Comamonadaceae</taxon>
        <taxon>Acidovorax</taxon>
    </lineage>
</organism>
<dbReference type="EC" id="2.1.1.166" evidence="1"/>
<dbReference type="EMBL" id="CP000539">
    <property type="protein sequence ID" value="ABM42545.1"/>
    <property type="status" value="ALT_INIT"/>
    <property type="molecule type" value="Genomic_DNA"/>
</dbReference>
<dbReference type="SMR" id="A1W8H0"/>
<dbReference type="STRING" id="232721.Ajs_2384"/>
<dbReference type="KEGG" id="ajs:Ajs_2384"/>
<dbReference type="eggNOG" id="COG0293">
    <property type="taxonomic scope" value="Bacteria"/>
</dbReference>
<dbReference type="HOGENOM" id="CLU_009422_4_1_4"/>
<dbReference type="Proteomes" id="UP000000645">
    <property type="component" value="Chromosome"/>
</dbReference>
<dbReference type="GO" id="GO:0005737">
    <property type="term" value="C:cytoplasm"/>
    <property type="evidence" value="ECO:0007669"/>
    <property type="project" value="UniProtKB-SubCell"/>
</dbReference>
<dbReference type="GO" id="GO:0008650">
    <property type="term" value="F:rRNA (uridine-2'-O-)-methyltransferase activity"/>
    <property type="evidence" value="ECO:0007669"/>
    <property type="project" value="UniProtKB-UniRule"/>
</dbReference>
<dbReference type="CDD" id="cd02440">
    <property type="entry name" value="AdoMet_MTases"/>
    <property type="match status" value="1"/>
</dbReference>
<dbReference type="FunFam" id="3.40.50.150:FF:000005">
    <property type="entry name" value="Ribosomal RNA large subunit methyltransferase E"/>
    <property type="match status" value="1"/>
</dbReference>
<dbReference type="Gene3D" id="3.40.50.150">
    <property type="entry name" value="Vaccinia Virus protein VP39"/>
    <property type="match status" value="1"/>
</dbReference>
<dbReference type="HAMAP" id="MF_01547">
    <property type="entry name" value="RNA_methyltr_E"/>
    <property type="match status" value="1"/>
</dbReference>
<dbReference type="InterPro" id="IPR050082">
    <property type="entry name" value="RNA_methyltr_RlmE"/>
</dbReference>
<dbReference type="InterPro" id="IPR002877">
    <property type="entry name" value="RNA_MeTrfase_FtsJ_dom"/>
</dbReference>
<dbReference type="InterPro" id="IPR015507">
    <property type="entry name" value="rRNA-MeTfrase_E"/>
</dbReference>
<dbReference type="InterPro" id="IPR029063">
    <property type="entry name" value="SAM-dependent_MTases_sf"/>
</dbReference>
<dbReference type="PANTHER" id="PTHR10920">
    <property type="entry name" value="RIBOSOMAL RNA METHYLTRANSFERASE"/>
    <property type="match status" value="1"/>
</dbReference>
<dbReference type="PANTHER" id="PTHR10920:SF18">
    <property type="entry name" value="RRNA METHYLTRANSFERASE 2, MITOCHONDRIAL"/>
    <property type="match status" value="1"/>
</dbReference>
<dbReference type="Pfam" id="PF01728">
    <property type="entry name" value="FtsJ"/>
    <property type="match status" value="1"/>
</dbReference>
<dbReference type="PIRSF" id="PIRSF005461">
    <property type="entry name" value="23S_rRNA_mtase"/>
    <property type="match status" value="1"/>
</dbReference>
<dbReference type="SUPFAM" id="SSF53335">
    <property type="entry name" value="S-adenosyl-L-methionine-dependent methyltransferases"/>
    <property type="match status" value="1"/>
</dbReference>
<proteinExistence type="inferred from homology"/>
<comment type="function">
    <text evidence="1">Specifically methylates the uridine in position 2552 of 23S rRNA at the 2'-O position of the ribose in the fully assembled 50S ribosomal subunit.</text>
</comment>
<comment type="catalytic activity">
    <reaction evidence="1">
        <text>uridine(2552) in 23S rRNA + S-adenosyl-L-methionine = 2'-O-methyluridine(2552) in 23S rRNA + S-adenosyl-L-homocysteine + H(+)</text>
        <dbReference type="Rhea" id="RHEA:42720"/>
        <dbReference type="Rhea" id="RHEA-COMP:10202"/>
        <dbReference type="Rhea" id="RHEA-COMP:10203"/>
        <dbReference type="ChEBI" id="CHEBI:15378"/>
        <dbReference type="ChEBI" id="CHEBI:57856"/>
        <dbReference type="ChEBI" id="CHEBI:59789"/>
        <dbReference type="ChEBI" id="CHEBI:65315"/>
        <dbReference type="ChEBI" id="CHEBI:74478"/>
        <dbReference type="EC" id="2.1.1.166"/>
    </reaction>
</comment>
<comment type="subcellular location">
    <subcellularLocation>
        <location evidence="1">Cytoplasm</location>
    </subcellularLocation>
</comment>
<comment type="similarity">
    <text evidence="1">Belongs to the class I-like SAM-binding methyltransferase superfamily. RNA methyltransferase RlmE family.</text>
</comment>
<comment type="sequence caution" evidence="2">
    <conflict type="erroneous initiation">
        <sequence resource="EMBL-CDS" id="ABM42545"/>
    </conflict>
</comment>
<gene>
    <name evidence="1" type="primary">rlmE</name>
    <name evidence="1" type="synonym">ftsJ</name>
    <name evidence="1" type="synonym">rrmJ</name>
    <name type="ordered locus">Ajs_2384</name>
</gene>
<protein>
    <recommendedName>
        <fullName evidence="1">Ribosomal RNA large subunit methyltransferase E</fullName>
        <ecNumber evidence="1">2.1.1.166</ecNumber>
    </recommendedName>
    <alternativeName>
        <fullName evidence="1">23S rRNA Um2552 methyltransferase</fullName>
    </alternativeName>
    <alternativeName>
        <fullName evidence="1">rRNA (uridine-2'-O-)-methyltransferase</fullName>
    </alternativeName>
</protein>
<keyword id="KW-0963">Cytoplasm</keyword>
<keyword id="KW-0489">Methyltransferase</keyword>
<keyword id="KW-0698">rRNA processing</keyword>
<keyword id="KW-0949">S-adenosyl-L-methionine</keyword>
<keyword id="KW-0808">Transferase</keyword>
<sequence length="220" mass="24160">MKAQTKSKKVNKAWLHDHVNDTYVKLAQKEGYRARAAYKLKEIDEQLGLIKPGHVVVDLGSSPGAWSQYVRRRLSPDGAAVGQLNGVIIALDILPMEPIEGVTFLQGDFREEEVLAGLQEAVQARPVDVVVSDMAPNLSGVESVDAVRIAHLIELAVDFAVHHLKPEGALVVKLFHGSGYSQLVQLFKDTFRVVKPMKPKASRDKSSETFLVGMGLKRQG</sequence>
<name>RLME_ACISJ</name>
<reference key="1">
    <citation type="submission" date="2006-12" db="EMBL/GenBank/DDBJ databases">
        <title>Complete sequence of chromosome 1 of Acidovorax sp. JS42.</title>
        <authorList>
            <person name="Copeland A."/>
            <person name="Lucas S."/>
            <person name="Lapidus A."/>
            <person name="Barry K."/>
            <person name="Detter J.C."/>
            <person name="Glavina del Rio T."/>
            <person name="Dalin E."/>
            <person name="Tice H."/>
            <person name="Pitluck S."/>
            <person name="Chertkov O."/>
            <person name="Brettin T."/>
            <person name="Bruce D."/>
            <person name="Han C."/>
            <person name="Tapia R."/>
            <person name="Gilna P."/>
            <person name="Schmutz J."/>
            <person name="Larimer F."/>
            <person name="Land M."/>
            <person name="Hauser L."/>
            <person name="Kyrpides N."/>
            <person name="Kim E."/>
            <person name="Stahl D."/>
            <person name="Richardson P."/>
        </authorList>
    </citation>
    <scope>NUCLEOTIDE SEQUENCE [LARGE SCALE GENOMIC DNA]</scope>
    <source>
        <strain>JS42</strain>
    </source>
</reference>